<feature type="chain" id="PRO_0000261689" description="Large ribosomal subunit protein uL13">
    <location>
        <begin position="1"/>
        <end position="154"/>
    </location>
</feature>
<gene>
    <name evidence="1" type="primary">rplM</name>
    <name type="ordered locus">BH07820</name>
</gene>
<organism>
    <name type="scientific">Bartonella henselae (strain ATCC 49882 / DSM 28221 / CCUG 30454 / Houston 1)</name>
    <name type="common">Rochalimaea henselae</name>
    <dbReference type="NCBI Taxonomy" id="283166"/>
    <lineage>
        <taxon>Bacteria</taxon>
        <taxon>Pseudomonadati</taxon>
        <taxon>Pseudomonadota</taxon>
        <taxon>Alphaproteobacteria</taxon>
        <taxon>Hyphomicrobiales</taxon>
        <taxon>Bartonellaceae</taxon>
        <taxon>Bartonella</taxon>
    </lineage>
</organism>
<accession>Q6G3I6</accession>
<reference key="1">
    <citation type="journal article" date="2004" name="Proc. Natl. Acad. Sci. U.S.A.">
        <title>The louse-borne human pathogen Bartonella quintana is a genomic derivative of the zoonotic agent Bartonella henselae.</title>
        <authorList>
            <person name="Alsmark U.C.M."/>
            <person name="Frank A.C."/>
            <person name="Karlberg E.O."/>
            <person name="Legault B.-A."/>
            <person name="Ardell D.H."/>
            <person name="Canbaeck B."/>
            <person name="Eriksson A.-S."/>
            <person name="Naeslund A.K."/>
            <person name="Handley S.A."/>
            <person name="Huvet M."/>
            <person name="La Scola B."/>
            <person name="Holmberg M."/>
            <person name="Andersson S.G.E."/>
        </authorList>
    </citation>
    <scope>NUCLEOTIDE SEQUENCE [LARGE SCALE GENOMIC DNA]</scope>
    <source>
        <strain>ATCC 49882 / DSM 28221 / CCUG 30454 / Houston 1</strain>
    </source>
</reference>
<dbReference type="EMBL" id="BX897699">
    <property type="protein sequence ID" value="CAF27582.1"/>
    <property type="molecule type" value="Genomic_DNA"/>
</dbReference>
<dbReference type="RefSeq" id="WP_011180683.1">
    <property type="nucleotide sequence ID" value="NZ_LRIJ02000001.1"/>
</dbReference>
<dbReference type="SMR" id="Q6G3I6"/>
<dbReference type="PaxDb" id="283166-BH07820"/>
<dbReference type="EnsemblBacteria" id="CAF27582">
    <property type="protein sequence ID" value="CAF27582"/>
    <property type="gene ID" value="BH07820"/>
</dbReference>
<dbReference type="GeneID" id="92985549"/>
<dbReference type="KEGG" id="bhe:BH07820"/>
<dbReference type="eggNOG" id="COG0102">
    <property type="taxonomic scope" value="Bacteria"/>
</dbReference>
<dbReference type="OrthoDB" id="9801330at2"/>
<dbReference type="Proteomes" id="UP000000421">
    <property type="component" value="Chromosome"/>
</dbReference>
<dbReference type="GO" id="GO:0022625">
    <property type="term" value="C:cytosolic large ribosomal subunit"/>
    <property type="evidence" value="ECO:0007669"/>
    <property type="project" value="TreeGrafter"/>
</dbReference>
<dbReference type="GO" id="GO:0003729">
    <property type="term" value="F:mRNA binding"/>
    <property type="evidence" value="ECO:0007669"/>
    <property type="project" value="TreeGrafter"/>
</dbReference>
<dbReference type="GO" id="GO:0003735">
    <property type="term" value="F:structural constituent of ribosome"/>
    <property type="evidence" value="ECO:0007669"/>
    <property type="project" value="InterPro"/>
</dbReference>
<dbReference type="GO" id="GO:0017148">
    <property type="term" value="P:negative regulation of translation"/>
    <property type="evidence" value="ECO:0007669"/>
    <property type="project" value="TreeGrafter"/>
</dbReference>
<dbReference type="GO" id="GO:0006412">
    <property type="term" value="P:translation"/>
    <property type="evidence" value="ECO:0007669"/>
    <property type="project" value="UniProtKB-UniRule"/>
</dbReference>
<dbReference type="CDD" id="cd00392">
    <property type="entry name" value="Ribosomal_L13"/>
    <property type="match status" value="1"/>
</dbReference>
<dbReference type="FunFam" id="3.90.1180.10:FF:000001">
    <property type="entry name" value="50S ribosomal protein L13"/>
    <property type="match status" value="1"/>
</dbReference>
<dbReference type="Gene3D" id="3.90.1180.10">
    <property type="entry name" value="Ribosomal protein L13"/>
    <property type="match status" value="1"/>
</dbReference>
<dbReference type="HAMAP" id="MF_01366">
    <property type="entry name" value="Ribosomal_uL13"/>
    <property type="match status" value="1"/>
</dbReference>
<dbReference type="InterPro" id="IPR005822">
    <property type="entry name" value="Ribosomal_uL13"/>
</dbReference>
<dbReference type="InterPro" id="IPR005823">
    <property type="entry name" value="Ribosomal_uL13_bac-type"/>
</dbReference>
<dbReference type="InterPro" id="IPR036899">
    <property type="entry name" value="Ribosomal_uL13_sf"/>
</dbReference>
<dbReference type="NCBIfam" id="TIGR01066">
    <property type="entry name" value="rplM_bact"/>
    <property type="match status" value="1"/>
</dbReference>
<dbReference type="PANTHER" id="PTHR11545:SF2">
    <property type="entry name" value="LARGE RIBOSOMAL SUBUNIT PROTEIN UL13M"/>
    <property type="match status" value="1"/>
</dbReference>
<dbReference type="PANTHER" id="PTHR11545">
    <property type="entry name" value="RIBOSOMAL PROTEIN L13"/>
    <property type="match status" value="1"/>
</dbReference>
<dbReference type="Pfam" id="PF00572">
    <property type="entry name" value="Ribosomal_L13"/>
    <property type="match status" value="1"/>
</dbReference>
<dbReference type="PIRSF" id="PIRSF002181">
    <property type="entry name" value="Ribosomal_L13"/>
    <property type="match status" value="1"/>
</dbReference>
<dbReference type="SUPFAM" id="SSF52161">
    <property type="entry name" value="Ribosomal protein L13"/>
    <property type="match status" value="1"/>
</dbReference>
<comment type="function">
    <text evidence="1">This protein is one of the early assembly proteins of the 50S ribosomal subunit, although it is not seen to bind rRNA by itself. It is important during the early stages of 50S assembly.</text>
</comment>
<comment type="subunit">
    <text evidence="1">Part of the 50S ribosomal subunit.</text>
</comment>
<comment type="similarity">
    <text evidence="1">Belongs to the universal ribosomal protein uL13 family.</text>
</comment>
<sequence>MATFSQKPTEVVKKWVIIDAENLVLGRLAAFVANRLRGKHKATFTPHVDDGDNVIVINADKISLTGKKYTDKKYYWHTGYIGGIKKRTARQILEGRFPERVVEKAVERMIPRGPLGRRQLKNLRVYAGSQHPHAAQQPEALDVGALNRKNKRIA</sequence>
<keyword id="KW-0687">Ribonucleoprotein</keyword>
<keyword id="KW-0689">Ribosomal protein</keyword>
<evidence type="ECO:0000255" key="1">
    <source>
        <dbReference type="HAMAP-Rule" id="MF_01366"/>
    </source>
</evidence>
<evidence type="ECO:0000305" key="2"/>
<name>RL13_BARHE</name>
<proteinExistence type="inferred from homology"/>
<protein>
    <recommendedName>
        <fullName evidence="1">Large ribosomal subunit protein uL13</fullName>
    </recommendedName>
    <alternativeName>
        <fullName evidence="2">50S ribosomal protein L13</fullName>
    </alternativeName>
</protein>